<accession>Q3JYM6</accession>
<evidence type="ECO:0000255" key="1">
    <source>
        <dbReference type="HAMAP-Rule" id="MF_00149"/>
    </source>
</evidence>
<comment type="function">
    <text evidence="1">This protein is involved in the repair of mismatches in DNA. It is required for dam-dependent methyl-directed DNA mismatch repair. May act as a 'molecular matchmaker', a protein that promotes the formation of a stable complex between two or more DNA-binding proteins in an ATP-dependent manner without itself being part of a final effector complex.</text>
</comment>
<comment type="similarity">
    <text evidence="1">Belongs to the DNA mismatch repair MutL/HexB family.</text>
</comment>
<gene>
    <name evidence="1" type="primary">mutL</name>
    <name type="ordered locus">SAK_2037</name>
</gene>
<keyword id="KW-0227">DNA damage</keyword>
<keyword id="KW-0234">DNA repair</keyword>
<protein>
    <recommendedName>
        <fullName evidence="1">DNA mismatch repair protein MutL</fullName>
    </recommendedName>
</protein>
<feature type="chain" id="PRO_1000010087" description="DNA mismatch repair protein MutL">
    <location>
        <begin position="1"/>
        <end position="657"/>
    </location>
</feature>
<name>MUTL_STRA1</name>
<sequence>MSKIIELPDILANQIAAGEVVERPSSVVKELVENAIDAGSSQITIEVEESGLKKIQITDNGEGMTSEDAVLSLRRHATSKIKSQSDLFRIRTLGFRGEALPSIASISLMTIKTATEQGKQGTLLVAKGGNIEKQEVVSSPRGTKILVENLFFNTPARLKYMKSLQSELAHIIDIVNRLSLAHPEVAFTLINDGKEMTKTSGTGDLRQAIAGIYGLNTAKKMIEISNADLDFEISGYVSLPELTRANRNYITLLINGRYIKNFLLNRSILDGYGSKLMVGRFPIAVIDIQIDPYLADVNVHPTKQEVRISKERELMSLISSAISESLKQYDLIPDALENLAKTSTRSVDKPIQTSFSLKQPGLYYDRTKNDFFIDADTVSEPIANFTNLDKSDGSVDNDVKNSVNQGATQSPNIKYASRDQADSENFIHSQDYLSSKQSLNKLVEKLDSEESSTFPELEFFGQMHGTYLFAQGNGGLYIIDQHAAQERVKYEYYREKIGEVDNSLQQLLVPFLFEFSSSDFLQLQEKMSLLQDVGIFLEPYGNNTFILREHPIWMKEEEVESGVYEMCDMLLLTNEVSVKKYRAELAIMMSCKRSIKANHTLDDYSARHLLDQLAQCKNPYNCPHGRPVLVNFTKADMEKMFKRIQENHTSLRDLGKY</sequence>
<proteinExistence type="inferred from homology"/>
<reference key="1">
    <citation type="journal article" date="2005" name="Proc. Natl. Acad. Sci. U.S.A.">
        <title>Genome analysis of multiple pathogenic isolates of Streptococcus agalactiae: implications for the microbial 'pan-genome'.</title>
        <authorList>
            <person name="Tettelin H."/>
            <person name="Masignani V."/>
            <person name="Cieslewicz M.J."/>
            <person name="Donati C."/>
            <person name="Medini D."/>
            <person name="Ward N.L."/>
            <person name="Angiuoli S.V."/>
            <person name="Crabtree J."/>
            <person name="Jones A.L."/>
            <person name="Durkin A.S."/>
            <person name="DeBoy R.T."/>
            <person name="Davidsen T.M."/>
            <person name="Mora M."/>
            <person name="Scarselli M."/>
            <person name="Margarit y Ros I."/>
            <person name="Peterson J.D."/>
            <person name="Hauser C.R."/>
            <person name="Sundaram J.P."/>
            <person name="Nelson W.C."/>
            <person name="Madupu R."/>
            <person name="Brinkac L.M."/>
            <person name="Dodson R.J."/>
            <person name="Rosovitz M.J."/>
            <person name="Sullivan S.A."/>
            <person name="Daugherty S.C."/>
            <person name="Haft D.H."/>
            <person name="Selengut J."/>
            <person name="Gwinn M.L."/>
            <person name="Zhou L."/>
            <person name="Zafar N."/>
            <person name="Khouri H."/>
            <person name="Radune D."/>
            <person name="Dimitrov G."/>
            <person name="Watkins K."/>
            <person name="O'Connor K.J."/>
            <person name="Smith S."/>
            <person name="Utterback T.R."/>
            <person name="White O."/>
            <person name="Rubens C.E."/>
            <person name="Grandi G."/>
            <person name="Madoff L.C."/>
            <person name="Kasper D.L."/>
            <person name="Telford J.L."/>
            <person name="Wessels M.R."/>
            <person name="Rappuoli R."/>
            <person name="Fraser C.M."/>
        </authorList>
    </citation>
    <scope>NUCLEOTIDE SEQUENCE [LARGE SCALE GENOMIC DNA]</scope>
    <source>
        <strain>ATCC 27591 / A909 / CDC SS700</strain>
    </source>
</reference>
<organism>
    <name type="scientific">Streptococcus agalactiae serotype Ia (strain ATCC 27591 / A909 / CDC SS700)</name>
    <dbReference type="NCBI Taxonomy" id="205921"/>
    <lineage>
        <taxon>Bacteria</taxon>
        <taxon>Bacillati</taxon>
        <taxon>Bacillota</taxon>
        <taxon>Bacilli</taxon>
        <taxon>Lactobacillales</taxon>
        <taxon>Streptococcaceae</taxon>
        <taxon>Streptococcus</taxon>
    </lineage>
</organism>
<dbReference type="EMBL" id="CP000114">
    <property type="protein sequence ID" value="ABA45255.1"/>
    <property type="molecule type" value="Genomic_DNA"/>
</dbReference>
<dbReference type="RefSeq" id="WP_000034614.1">
    <property type="nucleotide sequence ID" value="NC_007432.1"/>
</dbReference>
<dbReference type="SMR" id="Q3JYM6"/>
<dbReference type="KEGG" id="sak:SAK_2037"/>
<dbReference type="HOGENOM" id="CLU_004131_4_1_9"/>
<dbReference type="GO" id="GO:0032300">
    <property type="term" value="C:mismatch repair complex"/>
    <property type="evidence" value="ECO:0007669"/>
    <property type="project" value="InterPro"/>
</dbReference>
<dbReference type="GO" id="GO:0005524">
    <property type="term" value="F:ATP binding"/>
    <property type="evidence" value="ECO:0007669"/>
    <property type="project" value="InterPro"/>
</dbReference>
<dbReference type="GO" id="GO:0016887">
    <property type="term" value="F:ATP hydrolysis activity"/>
    <property type="evidence" value="ECO:0007669"/>
    <property type="project" value="InterPro"/>
</dbReference>
<dbReference type="GO" id="GO:0140664">
    <property type="term" value="F:ATP-dependent DNA damage sensor activity"/>
    <property type="evidence" value="ECO:0007669"/>
    <property type="project" value="InterPro"/>
</dbReference>
<dbReference type="GO" id="GO:0030983">
    <property type="term" value="F:mismatched DNA binding"/>
    <property type="evidence" value="ECO:0007669"/>
    <property type="project" value="InterPro"/>
</dbReference>
<dbReference type="GO" id="GO:0006298">
    <property type="term" value="P:mismatch repair"/>
    <property type="evidence" value="ECO:0007669"/>
    <property type="project" value="UniProtKB-UniRule"/>
</dbReference>
<dbReference type="CDD" id="cd16926">
    <property type="entry name" value="HATPase_MutL-MLH-PMS-like"/>
    <property type="match status" value="1"/>
</dbReference>
<dbReference type="CDD" id="cd00782">
    <property type="entry name" value="MutL_Trans"/>
    <property type="match status" value="1"/>
</dbReference>
<dbReference type="FunFam" id="3.30.1370.100:FF:000004">
    <property type="entry name" value="DNA mismatch repair endonuclease MutL"/>
    <property type="match status" value="1"/>
</dbReference>
<dbReference type="FunFam" id="3.30.565.10:FF:000003">
    <property type="entry name" value="DNA mismatch repair endonuclease MutL"/>
    <property type="match status" value="1"/>
</dbReference>
<dbReference type="Gene3D" id="3.30.230.10">
    <property type="match status" value="1"/>
</dbReference>
<dbReference type="Gene3D" id="3.30.565.10">
    <property type="entry name" value="Histidine kinase-like ATPase, C-terminal domain"/>
    <property type="match status" value="1"/>
</dbReference>
<dbReference type="Gene3D" id="3.30.1540.20">
    <property type="entry name" value="MutL, C-terminal domain, dimerisation subdomain"/>
    <property type="match status" value="1"/>
</dbReference>
<dbReference type="Gene3D" id="3.30.1370.100">
    <property type="entry name" value="MutL, C-terminal domain, regulatory subdomain"/>
    <property type="match status" value="1"/>
</dbReference>
<dbReference type="HAMAP" id="MF_00149">
    <property type="entry name" value="DNA_mis_repair"/>
    <property type="match status" value="1"/>
</dbReference>
<dbReference type="InterPro" id="IPR014762">
    <property type="entry name" value="DNA_mismatch_repair_CS"/>
</dbReference>
<dbReference type="InterPro" id="IPR020667">
    <property type="entry name" value="DNA_mismatch_repair_MutL"/>
</dbReference>
<dbReference type="InterPro" id="IPR013507">
    <property type="entry name" value="DNA_mismatch_S5_2-like"/>
</dbReference>
<dbReference type="InterPro" id="IPR036890">
    <property type="entry name" value="HATPase_C_sf"/>
</dbReference>
<dbReference type="InterPro" id="IPR002099">
    <property type="entry name" value="MutL/Mlh/PMS"/>
</dbReference>
<dbReference type="InterPro" id="IPR038973">
    <property type="entry name" value="MutL/Mlh/Pms-like"/>
</dbReference>
<dbReference type="InterPro" id="IPR014790">
    <property type="entry name" value="MutL_C"/>
</dbReference>
<dbReference type="InterPro" id="IPR042120">
    <property type="entry name" value="MutL_C_dimsub"/>
</dbReference>
<dbReference type="InterPro" id="IPR042121">
    <property type="entry name" value="MutL_C_regsub"/>
</dbReference>
<dbReference type="InterPro" id="IPR037198">
    <property type="entry name" value="MutL_C_sf"/>
</dbReference>
<dbReference type="InterPro" id="IPR020568">
    <property type="entry name" value="Ribosomal_Su5_D2-typ_SF"/>
</dbReference>
<dbReference type="InterPro" id="IPR014721">
    <property type="entry name" value="Ribsml_uS5_D2-typ_fold_subgr"/>
</dbReference>
<dbReference type="NCBIfam" id="TIGR00585">
    <property type="entry name" value="mutl"/>
    <property type="match status" value="1"/>
</dbReference>
<dbReference type="NCBIfam" id="NF000950">
    <property type="entry name" value="PRK00095.1-3"/>
    <property type="match status" value="1"/>
</dbReference>
<dbReference type="PANTHER" id="PTHR10073">
    <property type="entry name" value="DNA MISMATCH REPAIR PROTEIN MLH, PMS, MUTL"/>
    <property type="match status" value="1"/>
</dbReference>
<dbReference type="PANTHER" id="PTHR10073:SF12">
    <property type="entry name" value="DNA MISMATCH REPAIR PROTEIN MLH1"/>
    <property type="match status" value="1"/>
</dbReference>
<dbReference type="Pfam" id="PF01119">
    <property type="entry name" value="DNA_mis_repair"/>
    <property type="match status" value="1"/>
</dbReference>
<dbReference type="Pfam" id="PF13589">
    <property type="entry name" value="HATPase_c_3"/>
    <property type="match status" value="1"/>
</dbReference>
<dbReference type="Pfam" id="PF08676">
    <property type="entry name" value="MutL_C"/>
    <property type="match status" value="1"/>
</dbReference>
<dbReference type="SMART" id="SM01340">
    <property type="entry name" value="DNA_mis_repair"/>
    <property type="match status" value="1"/>
</dbReference>
<dbReference type="SMART" id="SM00853">
    <property type="entry name" value="MutL_C"/>
    <property type="match status" value="1"/>
</dbReference>
<dbReference type="SUPFAM" id="SSF55874">
    <property type="entry name" value="ATPase domain of HSP90 chaperone/DNA topoisomerase II/histidine kinase"/>
    <property type="match status" value="1"/>
</dbReference>
<dbReference type="SUPFAM" id="SSF118116">
    <property type="entry name" value="DNA mismatch repair protein MutL"/>
    <property type="match status" value="1"/>
</dbReference>
<dbReference type="SUPFAM" id="SSF54211">
    <property type="entry name" value="Ribosomal protein S5 domain 2-like"/>
    <property type="match status" value="1"/>
</dbReference>
<dbReference type="PROSITE" id="PS00058">
    <property type="entry name" value="DNA_MISMATCH_REPAIR_1"/>
    <property type="match status" value="1"/>
</dbReference>